<protein>
    <recommendedName>
        <fullName evidence="1">Probable septum site-determining protein MinC</fullName>
    </recommendedName>
</protein>
<feature type="chain" id="PRO_1000047836" description="Probable septum site-determining protein MinC">
    <location>
        <begin position="1"/>
        <end position="218"/>
    </location>
</feature>
<organism>
    <name type="scientific">Moorella thermoacetica (strain ATCC 39073 / JCM 9320)</name>
    <dbReference type="NCBI Taxonomy" id="264732"/>
    <lineage>
        <taxon>Bacteria</taxon>
        <taxon>Bacillati</taxon>
        <taxon>Bacillota</taxon>
        <taxon>Clostridia</taxon>
        <taxon>Moorellales</taxon>
        <taxon>Moorellaceae</taxon>
        <taxon>Moorella</taxon>
    </lineage>
</organism>
<comment type="function">
    <text evidence="1">Cell division inhibitor that blocks the formation of polar Z ring septums. Rapidly oscillates between the poles of the cell to destabilize FtsZ filaments that have formed before they mature into polar Z rings. Prevents FtsZ polymerization.</text>
</comment>
<comment type="subunit">
    <text evidence="1">Interacts with MinD and FtsZ.</text>
</comment>
<comment type="similarity">
    <text evidence="1">Belongs to the MinC family.</text>
</comment>
<gene>
    <name evidence="1" type="primary">minC</name>
    <name type="ordered locus">Moth_1865</name>
</gene>
<evidence type="ECO:0000255" key="1">
    <source>
        <dbReference type="HAMAP-Rule" id="MF_00267"/>
    </source>
</evidence>
<keyword id="KW-0131">Cell cycle</keyword>
<keyword id="KW-0132">Cell division</keyword>
<keyword id="KW-0717">Septation</keyword>
<reference key="1">
    <citation type="journal article" date="2008" name="Environ. Microbiol.">
        <title>The complete genome sequence of Moorella thermoacetica (f. Clostridium thermoaceticum).</title>
        <authorList>
            <person name="Pierce E."/>
            <person name="Xie G."/>
            <person name="Barabote R.D."/>
            <person name="Saunders E."/>
            <person name="Han C.S."/>
            <person name="Detter J.C."/>
            <person name="Richardson P."/>
            <person name="Brettin T.S."/>
            <person name="Das A."/>
            <person name="Ljungdahl L.G."/>
            <person name="Ragsdale S.W."/>
        </authorList>
    </citation>
    <scope>NUCLEOTIDE SEQUENCE [LARGE SCALE GENOMIC DNA]</scope>
    <source>
        <strain>ATCC 39073 / JCM 9320</strain>
    </source>
</reference>
<proteinExistence type="inferred from homology"/>
<name>MINC_MOOTA</name>
<accession>Q2RHC4</accession>
<dbReference type="EMBL" id="CP000232">
    <property type="protein sequence ID" value="ABC20165.1"/>
    <property type="molecule type" value="Genomic_DNA"/>
</dbReference>
<dbReference type="RefSeq" id="YP_430708.1">
    <property type="nucleotide sequence ID" value="NC_007644.1"/>
</dbReference>
<dbReference type="SMR" id="Q2RHC4"/>
<dbReference type="STRING" id="264732.Moth_1865"/>
<dbReference type="EnsemblBacteria" id="ABC20165">
    <property type="protein sequence ID" value="ABC20165"/>
    <property type="gene ID" value="Moth_1865"/>
</dbReference>
<dbReference type="KEGG" id="mta:Moth_1865"/>
<dbReference type="PATRIC" id="fig|264732.11.peg.2021"/>
<dbReference type="eggNOG" id="COG0850">
    <property type="taxonomic scope" value="Bacteria"/>
</dbReference>
<dbReference type="HOGENOM" id="CLU_048711_2_0_9"/>
<dbReference type="OrthoDB" id="9790810at2"/>
<dbReference type="GO" id="GO:0000902">
    <property type="term" value="P:cell morphogenesis"/>
    <property type="evidence" value="ECO:0007669"/>
    <property type="project" value="InterPro"/>
</dbReference>
<dbReference type="GO" id="GO:0000917">
    <property type="term" value="P:division septum assembly"/>
    <property type="evidence" value="ECO:0007669"/>
    <property type="project" value="UniProtKB-KW"/>
</dbReference>
<dbReference type="GO" id="GO:0051302">
    <property type="term" value="P:regulation of cell division"/>
    <property type="evidence" value="ECO:0007669"/>
    <property type="project" value="InterPro"/>
</dbReference>
<dbReference type="GO" id="GO:1901891">
    <property type="term" value="P:regulation of cell septum assembly"/>
    <property type="evidence" value="ECO:0007669"/>
    <property type="project" value="InterPro"/>
</dbReference>
<dbReference type="Gene3D" id="2.160.20.70">
    <property type="match status" value="1"/>
</dbReference>
<dbReference type="Gene3D" id="3.30.160.540">
    <property type="match status" value="1"/>
</dbReference>
<dbReference type="HAMAP" id="MF_00267">
    <property type="entry name" value="MinC"/>
    <property type="match status" value="1"/>
</dbReference>
<dbReference type="InterPro" id="IPR016098">
    <property type="entry name" value="CAP/MinC_C"/>
</dbReference>
<dbReference type="InterPro" id="IPR013033">
    <property type="entry name" value="MinC"/>
</dbReference>
<dbReference type="InterPro" id="IPR036145">
    <property type="entry name" value="MinC_C_sf"/>
</dbReference>
<dbReference type="InterPro" id="IPR007874">
    <property type="entry name" value="MinC_N"/>
</dbReference>
<dbReference type="InterPro" id="IPR005526">
    <property type="entry name" value="Septum_form_inhib_MinC_C"/>
</dbReference>
<dbReference type="NCBIfam" id="TIGR01222">
    <property type="entry name" value="minC"/>
    <property type="match status" value="1"/>
</dbReference>
<dbReference type="PANTHER" id="PTHR34108">
    <property type="entry name" value="SEPTUM SITE-DETERMINING PROTEIN MINC"/>
    <property type="match status" value="1"/>
</dbReference>
<dbReference type="PANTHER" id="PTHR34108:SF1">
    <property type="entry name" value="SEPTUM SITE-DETERMINING PROTEIN MINC"/>
    <property type="match status" value="1"/>
</dbReference>
<dbReference type="Pfam" id="PF03775">
    <property type="entry name" value="MinC_C"/>
    <property type="match status" value="1"/>
</dbReference>
<dbReference type="Pfam" id="PF05209">
    <property type="entry name" value="MinC_N"/>
    <property type="match status" value="1"/>
</dbReference>
<dbReference type="SUPFAM" id="SSF63848">
    <property type="entry name" value="Cell-division inhibitor MinC, C-terminal domain"/>
    <property type="match status" value="1"/>
</dbReference>
<sequence length="218" mass="23244">MAQDCITIKGTRGGLLILLDASRDFNEIKANLAAKFAAARGFFRGAAFALVPTSPLNSQETAELEAICREHGLVPGNNITLPSRRRPGGNQAAHPDPVALTSTGLPTLLDEGNLRNGQEINYPGHVMWLGDVHQGATIRAGGNILIMGTLKGNAHAGSQGDRSAAIVAYRMEPEQLGIAGIIARSPEQKTRHPYPEIARLVGTRIVIDPYLSPKSSRN</sequence>